<organism>
    <name type="scientific">Roseiflexus sp. (strain RS-1)</name>
    <dbReference type="NCBI Taxonomy" id="357808"/>
    <lineage>
        <taxon>Bacteria</taxon>
        <taxon>Bacillati</taxon>
        <taxon>Chloroflexota</taxon>
        <taxon>Chloroflexia</taxon>
        <taxon>Chloroflexales</taxon>
        <taxon>Roseiflexineae</taxon>
        <taxon>Roseiflexaceae</taxon>
        <taxon>Roseiflexus</taxon>
    </lineage>
</organism>
<gene>
    <name evidence="1" type="primary">folD</name>
    <name type="ordered locus">RoseRS_4392</name>
</gene>
<dbReference type="EC" id="1.5.1.5" evidence="1"/>
<dbReference type="EC" id="3.5.4.9" evidence="1"/>
<dbReference type="EMBL" id="CP000686">
    <property type="protein sequence ID" value="ABQ92725.1"/>
    <property type="molecule type" value="Genomic_DNA"/>
</dbReference>
<dbReference type="RefSeq" id="WP_011959062.1">
    <property type="nucleotide sequence ID" value="NC_009523.1"/>
</dbReference>
<dbReference type="SMR" id="A5V1H2"/>
<dbReference type="STRING" id="357808.RoseRS_4392"/>
<dbReference type="KEGG" id="rrs:RoseRS_4392"/>
<dbReference type="eggNOG" id="COG0190">
    <property type="taxonomic scope" value="Bacteria"/>
</dbReference>
<dbReference type="HOGENOM" id="CLU_034045_2_1_0"/>
<dbReference type="OrthoDB" id="9803580at2"/>
<dbReference type="UniPathway" id="UPA00193"/>
<dbReference type="Proteomes" id="UP000006554">
    <property type="component" value="Chromosome"/>
</dbReference>
<dbReference type="GO" id="GO:0005829">
    <property type="term" value="C:cytosol"/>
    <property type="evidence" value="ECO:0007669"/>
    <property type="project" value="TreeGrafter"/>
</dbReference>
<dbReference type="GO" id="GO:0004477">
    <property type="term" value="F:methenyltetrahydrofolate cyclohydrolase activity"/>
    <property type="evidence" value="ECO:0007669"/>
    <property type="project" value="UniProtKB-UniRule"/>
</dbReference>
<dbReference type="GO" id="GO:0004488">
    <property type="term" value="F:methylenetetrahydrofolate dehydrogenase (NADP+) activity"/>
    <property type="evidence" value="ECO:0007669"/>
    <property type="project" value="UniProtKB-UniRule"/>
</dbReference>
<dbReference type="GO" id="GO:0000105">
    <property type="term" value="P:L-histidine biosynthetic process"/>
    <property type="evidence" value="ECO:0007669"/>
    <property type="project" value="UniProtKB-KW"/>
</dbReference>
<dbReference type="GO" id="GO:0009086">
    <property type="term" value="P:methionine biosynthetic process"/>
    <property type="evidence" value="ECO:0007669"/>
    <property type="project" value="UniProtKB-KW"/>
</dbReference>
<dbReference type="GO" id="GO:0006164">
    <property type="term" value="P:purine nucleotide biosynthetic process"/>
    <property type="evidence" value="ECO:0007669"/>
    <property type="project" value="UniProtKB-KW"/>
</dbReference>
<dbReference type="GO" id="GO:0035999">
    <property type="term" value="P:tetrahydrofolate interconversion"/>
    <property type="evidence" value="ECO:0007669"/>
    <property type="project" value="UniProtKB-UniRule"/>
</dbReference>
<dbReference type="CDD" id="cd01080">
    <property type="entry name" value="NAD_bind_m-THF_DH_Cyclohyd"/>
    <property type="match status" value="1"/>
</dbReference>
<dbReference type="FunFam" id="3.40.50.720:FF:000094">
    <property type="entry name" value="Bifunctional protein FolD"/>
    <property type="match status" value="1"/>
</dbReference>
<dbReference type="FunFam" id="3.40.50.10860:FF:000005">
    <property type="entry name" value="C-1-tetrahydrofolate synthase, cytoplasmic, putative"/>
    <property type="match status" value="1"/>
</dbReference>
<dbReference type="Gene3D" id="3.40.50.10860">
    <property type="entry name" value="Leucine Dehydrogenase, chain A, domain 1"/>
    <property type="match status" value="1"/>
</dbReference>
<dbReference type="Gene3D" id="3.40.50.720">
    <property type="entry name" value="NAD(P)-binding Rossmann-like Domain"/>
    <property type="match status" value="1"/>
</dbReference>
<dbReference type="HAMAP" id="MF_01576">
    <property type="entry name" value="THF_DHG_CYH"/>
    <property type="match status" value="1"/>
</dbReference>
<dbReference type="InterPro" id="IPR046346">
    <property type="entry name" value="Aminoacid_DH-like_N_sf"/>
</dbReference>
<dbReference type="InterPro" id="IPR036291">
    <property type="entry name" value="NAD(P)-bd_dom_sf"/>
</dbReference>
<dbReference type="InterPro" id="IPR000672">
    <property type="entry name" value="THF_DH/CycHdrlase"/>
</dbReference>
<dbReference type="InterPro" id="IPR020630">
    <property type="entry name" value="THF_DH/CycHdrlase_cat_dom"/>
</dbReference>
<dbReference type="InterPro" id="IPR020631">
    <property type="entry name" value="THF_DH/CycHdrlase_NAD-bd_dom"/>
</dbReference>
<dbReference type="PANTHER" id="PTHR48099:SF5">
    <property type="entry name" value="C-1-TETRAHYDROFOLATE SYNTHASE, CYTOPLASMIC"/>
    <property type="match status" value="1"/>
</dbReference>
<dbReference type="PANTHER" id="PTHR48099">
    <property type="entry name" value="C-1-TETRAHYDROFOLATE SYNTHASE, CYTOPLASMIC-RELATED"/>
    <property type="match status" value="1"/>
</dbReference>
<dbReference type="Pfam" id="PF00763">
    <property type="entry name" value="THF_DHG_CYH"/>
    <property type="match status" value="1"/>
</dbReference>
<dbReference type="Pfam" id="PF02882">
    <property type="entry name" value="THF_DHG_CYH_C"/>
    <property type="match status" value="1"/>
</dbReference>
<dbReference type="PRINTS" id="PR00085">
    <property type="entry name" value="THFDHDRGNASE"/>
</dbReference>
<dbReference type="SUPFAM" id="SSF53223">
    <property type="entry name" value="Aminoacid dehydrogenase-like, N-terminal domain"/>
    <property type="match status" value="1"/>
</dbReference>
<dbReference type="SUPFAM" id="SSF51735">
    <property type="entry name" value="NAD(P)-binding Rossmann-fold domains"/>
    <property type="match status" value="1"/>
</dbReference>
<proteinExistence type="inferred from homology"/>
<comment type="function">
    <text evidence="1">Catalyzes the oxidation of 5,10-methylenetetrahydrofolate to 5,10-methenyltetrahydrofolate and then the hydrolysis of 5,10-methenyltetrahydrofolate to 10-formyltetrahydrofolate.</text>
</comment>
<comment type="catalytic activity">
    <reaction evidence="1">
        <text>(6R)-5,10-methylene-5,6,7,8-tetrahydrofolate + NADP(+) = (6R)-5,10-methenyltetrahydrofolate + NADPH</text>
        <dbReference type="Rhea" id="RHEA:22812"/>
        <dbReference type="ChEBI" id="CHEBI:15636"/>
        <dbReference type="ChEBI" id="CHEBI:57455"/>
        <dbReference type="ChEBI" id="CHEBI:57783"/>
        <dbReference type="ChEBI" id="CHEBI:58349"/>
        <dbReference type="EC" id="1.5.1.5"/>
    </reaction>
</comment>
<comment type="catalytic activity">
    <reaction evidence="1">
        <text>(6R)-5,10-methenyltetrahydrofolate + H2O = (6R)-10-formyltetrahydrofolate + H(+)</text>
        <dbReference type="Rhea" id="RHEA:23700"/>
        <dbReference type="ChEBI" id="CHEBI:15377"/>
        <dbReference type="ChEBI" id="CHEBI:15378"/>
        <dbReference type="ChEBI" id="CHEBI:57455"/>
        <dbReference type="ChEBI" id="CHEBI:195366"/>
        <dbReference type="EC" id="3.5.4.9"/>
    </reaction>
</comment>
<comment type="pathway">
    <text evidence="1">One-carbon metabolism; tetrahydrofolate interconversion.</text>
</comment>
<comment type="subunit">
    <text evidence="1">Homodimer.</text>
</comment>
<comment type="similarity">
    <text evidence="1">Belongs to the tetrahydrofolate dehydrogenase/cyclohydrolase family.</text>
</comment>
<keyword id="KW-0028">Amino-acid biosynthesis</keyword>
<keyword id="KW-0368">Histidine biosynthesis</keyword>
<keyword id="KW-0378">Hydrolase</keyword>
<keyword id="KW-0486">Methionine biosynthesis</keyword>
<keyword id="KW-0511">Multifunctional enzyme</keyword>
<keyword id="KW-0521">NADP</keyword>
<keyword id="KW-0554">One-carbon metabolism</keyword>
<keyword id="KW-0560">Oxidoreductase</keyword>
<keyword id="KW-0658">Purine biosynthesis</keyword>
<sequence length="288" mass="30276">MTAIILDGRALAKTLREELRADTQAFIQNNGIAPSLAVVKIAGDPASDRYTRTIRKGCEEIGITFTDHTLPPETTQAMLEETISALSFDRTIHGILLHLPLPPGLDSARAIAQIDPAKDVDGVHPYNAGLLAMGRPGLIPNTPAGGMELLLRNNIPLKGQHATVVGRSVVVGKPMALLLLNEHATVTIAHSRTKDLAAVVRSADIVVAATGKPGLITGDMVKPGAVVVDFGVNVLEDGRVVGDVDFDSVVNVASAITPVPGGTGPVTNVMLLRNVLRAAQQQLASRHH</sequence>
<protein>
    <recommendedName>
        <fullName evidence="1">Bifunctional protein FolD</fullName>
    </recommendedName>
    <domain>
        <recommendedName>
            <fullName evidence="1">Methylenetetrahydrofolate dehydrogenase</fullName>
            <ecNumber evidence="1">1.5.1.5</ecNumber>
        </recommendedName>
    </domain>
    <domain>
        <recommendedName>
            <fullName evidence="1">Methenyltetrahydrofolate cyclohydrolase</fullName>
            <ecNumber evidence="1">3.5.4.9</ecNumber>
        </recommendedName>
    </domain>
</protein>
<evidence type="ECO:0000255" key="1">
    <source>
        <dbReference type="HAMAP-Rule" id="MF_01576"/>
    </source>
</evidence>
<feature type="chain" id="PRO_1000069255" description="Bifunctional protein FolD">
    <location>
        <begin position="1"/>
        <end position="288"/>
    </location>
</feature>
<feature type="binding site" evidence="1">
    <location>
        <begin position="166"/>
        <end position="168"/>
    </location>
    <ligand>
        <name>NADP(+)</name>
        <dbReference type="ChEBI" id="CHEBI:58349"/>
    </ligand>
</feature>
<feature type="binding site" evidence="1">
    <location>
        <position position="191"/>
    </location>
    <ligand>
        <name>NADP(+)</name>
        <dbReference type="ChEBI" id="CHEBI:58349"/>
    </ligand>
</feature>
<feature type="binding site" evidence="1">
    <location>
        <position position="232"/>
    </location>
    <ligand>
        <name>NADP(+)</name>
        <dbReference type="ChEBI" id="CHEBI:58349"/>
    </ligand>
</feature>
<reference key="1">
    <citation type="submission" date="2007-04" db="EMBL/GenBank/DDBJ databases">
        <title>Complete sequence of Roseiflexus sp. RS-1.</title>
        <authorList>
            <consortium name="US DOE Joint Genome Institute"/>
            <person name="Copeland A."/>
            <person name="Lucas S."/>
            <person name="Lapidus A."/>
            <person name="Barry K."/>
            <person name="Detter J.C."/>
            <person name="Glavina del Rio T."/>
            <person name="Hammon N."/>
            <person name="Israni S."/>
            <person name="Dalin E."/>
            <person name="Tice H."/>
            <person name="Pitluck S."/>
            <person name="Chertkov O."/>
            <person name="Brettin T."/>
            <person name="Bruce D."/>
            <person name="Han C."/>
            <person name="Schmutz J."/>
            <person name="Larimer F."/>
            <person name="Land M."/>
            <person name="Hauser L."/>
            <person name="Kyrpides N."/>
            <person name="Mikhailova N."/>
            <person name="Bryant D.A."/>
            <person name="Richardson P."/>
        </authorList>
    </citation>
    <scope>NUCLEOTIDE SEQUENCE [LARGE SCALE GENOMIC DNA]</scope>
    <source>
        <strain>RS-1</strain>
    </source>
</reference>
<accession>A5V1H2</accession>
<name>FOLD_ROSS1</name>